<reference key="1">
    <citation type="journal article" date="2004" name="Nat. Genet.">
        <title>Comparison of genome degradation in Paratyphi A and Typhi, human-restricted serovars of Salmonella enterica that cause typhoid.</title>
        <authorList>
            <person name="McClelland M."/>
            <person name="Sanderson K.E."/>
            <person name="Clifton S.W."/>
            <person name="Latreille P."/>
            <person name="Porwollik S."/>
            <person name="Sabo A."/>
            <person name="Meyer R."/>
            <person name="Bieri T."/>
            <person name="Ozersky P."/>
            <person name="McLellan M."/>
            <person name="Harkins C.R."/>
            <person name="Wang C."/>
            <person name="Nguyen C."/>
            <person name="Berghoff A."/>
            <person name="Elliott G."/>
            <person name="Kohlberg S."/>
            <person name="Strong C."/>
            <person name="Du F."/>
            <person name="Carter J."/>
            <person name="Kremizki C."/>
            <person name="Layman D."/>
            <person name="Leonard S."/>
            <person name="Sun H."/>
            <person name="Fulton L."/>
            <person name="Nash W."/>
            <person name="Miner T."/>
            <person name="Minx P."/>
            <person name="Delehaunty K."/>
            <person name="Fronick C."/>
            <person name="Magrini V."/>
            <person name="Nhan M."/>
            <person name="Warren W."/>
            <person name="Florea L."/>
            <person name="Spieth J."/>
            <person name="Wilson R.K."/>
        </authorList>
    </citation>
    <scope>NUCLEOTIDE SEQUENCE [LARGE SCALE GENOMIC DNA]</scope>
    <source>
        <strain>ATCC 9150 / SARB42</strain>
    </source>
</reference>
<name>MDTH_SALPA</name>
<proteinExistence type="inferred from homology"/>
<sequence>MSRVSQARNLGKYFLLIDNMLVVLGFFVVFPLISIRFVDQMGWAAVMVGIALGLRQFIQQGLGIFGGAIADRFGAKPMIVTGMLMRAAGFATMGIAHEPWLLWFSCFLSGLGGTLFDPPRSALVVKLIRPEQRGRFFSLLMMQDSAGAVIGALLGSWLLQYDFRLVCATGAILFILCALFNAWLLPAWKLSTVRTPVREGMRRVMSDKRFVTYVLTLAGYYMLAVQVMLMLPIMVNDIAGSPAAVKWMYAIEACLSLTLLYPIARWSEKRFRLEHRLMAGLLVMSLSMLPIGMVGNLQQLFTLICAFYIGSVIAEPARETLSASLADARARGSYMGFSRLGLAIGGAIGYIGGGWLFDMGKALAQPELPWMMLGIIGFITFLALGWQFSHKRTPRRMLEPGA</sequence>
<feature type="chain" id="PRO_0000173348" description="Multidrug resistance protein MdtH">
    <location>
        <begin position="1"/>
        <end position="402"/>
    </location>
</feature>
<feature type="topological domain" description="Cytoplasmic" evidence="1">
    <location>
        <begin position="1"/>
        <end position="12"/>
    </location>
</feature>
<feature type="transmembrane region" description="Helical" evidence="1">
    <location>
        <begin position="13"/>
        <end position="33"/>
    </location>
</feature>
<feature type="topological domain" description="Periplasmic" evidence="1">
    <location>
        <begin position="34"/>
        <end position="98"/>
    </location>
</feature>
<feature type="transmembrane region" description="Helical" evidence="1">
    <location>
        <begin position="99"/>
        <end position="116"/>
    </location>
</feature>
<feature type="topological domain" description="Cytoplasmic" evidence="1">
    <location>
        <begin position="117"/>
        <end position="138"/>
    </location>
</feature>
<feature type="transmembrane region" description="Helical" evidence="1">
    <location>
        <begin position="139"/>
        <end position="159"/>
    </location>
</feature>
<feature type="topological domain" description="Periplasmic" evidence="1">
    <location>
        <begin position="160"/>
        <end position="164"/>
    </location>
</feature>
<feature type="transmembrane region" description="Helical" evidence="1">
    <location>
        <begin position="165"/>
        <end position="185"/>
    </location>
</feature>
<feature type="topological domain" description="Cytoplasmic" evidence="1">
    <location>
        <begin position="186"/>
        <end position="213"/>
    </location>
</feature>
<feature type="transmembrane region" description="Helical" evidence="1">
    <location>
        <begin position="214"/>
        <end position="234"/>
    </location>
</feature>
<feature type="topological domain" description="Periplasmic" evidence="1">
    <location>
        <begin position="235"/>
        <end position="243"/>
    </location>
</feature>
<feature type="transmembrane region" description="Helical" evidence="1">
    <location>
        <begin position="244"/>
        <end position="264"/>
    </location>
</feature>
<feature type="topological domain" description="Cytoplasmic" evidence="1">
    <location>
        <begin position="265"/>
        <end position="276"/>
    </location>
</feature>
<feature type="transmembrane region" description="Helical" evidence="1">
    <location>
        <begin position="277"/>
        <end position="297"/>
    </location>
</feature>
<feature type="topological domain" description="Periplasmic" evidence="1">
    <location>
        <begin position="298"/>
        <end position="299"/>
    </location>
</feature>
<feature type="transmembrane region" description="Helical" evidence="1">
    <location>
        <begin position="300"/>
        <end position="320"/>
    </location>
</feature>
<feature type="topological domain" description="Cytoplasmic" evidence="1">
    <location>
        <begin position="321"/>
        <end position="339"/>
    </location>
</feature>
<feature type="transmembrane region" description="Helical" evidence="1">
    <location>
        <begin position="340"/>
        <end position="360"/>
    </location>
</feature>
<feature type="topological domain" description="Periplasmic" evidence="1">
    <location>
        <begin position="361"/>
        <end position="367"/>
    </location>
</feature>
<feature type="transmembrane region" description="Helical" evidence="1">
    <location>
        <begin position="368"/>
        <end position="388"/>
    </location>
</feature>
<feature type="topological domain" description="Cytoplasmic" evidence="1">
    <location>
        <begin position="389"/>
        <end position="402"/>
    </location>
</feature>
<gene>
    <name evidence="1" type="primary">mdtH</name>
    <name type="ordered locus">SPA1685</name>
</gene>
<protein>
    <recommendedName>
        <fullName evidence="1">Multidrug resistance protein MdtH</fullName>
    </recommendedName>
</protein>
<dbReference type="EMBL" id="CP000026">
    <property type="protein sequence ID" value="AAV77610.1"/>
    <property type="molecule type" value="Genomic_DNA"/>
</dbReference>
<dbReference type="RefSeq" id="WP_000092178.1">
    <property type="nucleotide sequence ID" value="NC_006511.1"/>
</dbReference>
<dbReference type="SMR" id="Q5PGW7"/>
<dbReference type="KEGG" id="spt:SPA1685"/>
<dbReference type="HOGENOM" id="CLU_001265_60_2_6"/>
<dbReference type="Proteomes" id="UP000008185">
    <property type="component" value="Chromosome"/>
</dbReference>
<dbReference type="GO" id="GO:0005886">
    <property type="term" value="C:plasma membrane"/>
    <property type="evidence" value="ECO:0007669"/>
    <property type="project" value="UniProtKB-SubCell"/>
</dbReference>
<dbReference type="GO" id="GO:0022857">
    <property type="term" value="F:transmembrane transporter activity"/>
    <property type="evidence" value="ECO:0007669"/>
    <property type="project" value="UniProtKB-UniRule"/>
</dbReference>
<dbReference type="CDD" id="cd17329">
    <property type="entry name" value="MFS_MdtH_MDR_like"/>
    <property type="match status" value="1"/>
</dbReference>
<dbReference type="FunFam" id="1.20.1250.20:FF:000039">
    <property type="entry name" value="Multidrug resistance protein MdtH"/>
    <property type="match status" value="1"/>
</dbReference>
<dbReference type="Gene3D" id="1.20.1250.20">
    <property type="entry name" value="MFS general substrate transporter like domains"/>
    <property type="match status" value="1"/>
</dbReference>
<dbReference type="HAMAP" id="MF_01529">
    <property type="entry name" value="MFS_MdtH"/>
    <property type="match status" value="1"/>
</dbReference>
<dbReference type="InterPro" id="IPR011701">
    <property type="entry name" value="MFS"/>
</dbReference>
<dbReference type="InterPro" id="IPR020846">
    <property type="entry name" value="MFS_dom"/>
</dbReference>
<dbReference type="InterPro" id="IPR036259">
    <property type="entry name" value="MFS_trans_sf"/>
</dbReference>
<dbReference type="InterPro" id="IPR050171">
    <property type="entry name" value="MFS_Transporters"/>
</dbReference>
<dbReference type="InterPro" id="IPR022855">
    <property type="entry name" value="Multidrug-R_MdtH"/>
</dbReference>
<dbReference type="NCBIfam" id="NF008650">
    <property type="entry name" value="PRK11646.1"/>
    <property type="match status" value="1"/>
</dbReference>
<dbReference type="PANTHER" id="PTHR23517:SF2">
    <property type="entry name" value="MULTIDRUG RESISTANCE PROTEIN MDTH"/>
    <property type="match status" value="1"/>
</dbReference>
<dbReference type="PANTHER" id="PTHR23517">
    <property type="entry name" value="RESISTANCE PROTEIN MDTM, PUTATIVE-RELATED-RELATED"/>
    <property type="match status" value="1"/>
</dbReference>
<dbReference type="Pfam" id="PF07690">
    <property type="entry name" value="MFS_1"/>
    <property type="match status" value="1"/>
</dbReference>
<dbReference type="SUPFAM" id="SSF103473">
    <property type="entry name" value="MFS general substrate transporter"/>
    <property type="match status" value="1"/>
</dbReference>
<dbReference type="PROSITE" id="PS50850">
    <property type="entry name" value="MFS"/>
    <property type="match status" value="1"/>
</dbReference>
<accession>Q5PGW7</accession>
<keyword id="KW-0997">Cell inner membrane</keyword>
<keyword id="KW-1003">Cell membrane</keyword>
<keyword id="KW-0472">Membrane</keyword>
<keyword id="KW-0812">Transmembrane</keyword>
<keyword id="KW-1133">Transmembrane helix</keyword>
<keyword id="KW-0813">Transport</keyword>
<evidence type="ECO:0000255" key="1">
    <source>
        <dbReference type="HAMAP-Rule" id="MF_01529"/>
    </source>
</evidence>
<comment type="subcellular location">
    <subcellularLocation>
        <location evidence="1">Cell inner membrane</location>
        <topology evidence="1">Multi-pass membrane protein</topology>
    </subcellularLocation>
</comment>
<comment type="similarity">
    <text evidence="1">Belongs to the major facilitator superfamily. DHA1 family. MdtH (TC 2.A.1.2.21) subfamily.</text>
</comment>
<organism>
    <name type="scientific">Salmonella paratyphi A (strain ATCC 9150 / SARB42)</name>
    <dbReference type="NCBI Taxonomy" id="295319"/>
    <lineage>
        <taxon>Bacteria</taxon>
        <taxon>Pseudomonadati</taxon>
        <taxon>Pseudomonadota</taxon>
        <taxon>Gammaproteobacteria</taxon>
        <taxon>Enterobacterales</taxon>
        <taxon>Enterobacteriaceae</taxon>
        <taxon>Salmonella</taxon>
    </lineage>
</organism>